<organism>
    <name type="scientific">Chlamydia trachomatis serovar L2b (strain UCH-1/proctitis)</name>
    <dbReference type="NCBI Taxonomy" id="471473"/>
    <lineage>
        <taxon>Bacteria</taxon>
        <taxon>Pseudomonadati</taxon>
        <taxon>Chlamydiota</taxon>
        <taxon>Chlamydiia</taxon>
        <taxon>Chlamydiales</taxon>
        <taxon>Chlamydiaceae</taxon>
        <taxon>Chlamydia/Chlamydophila group</taxon>
        <taxon>Chlamydia</taxon>
    </lineage>
</organism>
<evidence type="ECO:0000255" key="1">
    <source>
        <dbReference type="HAMAP-Rule" id="MF_00163"/>
    </source>
</evidence>
<feature type="chain" id="PRO_1000097301" description="Peptide deformylase">
    <location>
        <begin position="1"/>
        <end position="181"/>
    </location>
</feature>
<feature type="active site" evidence="1">
    <location>
        <position position="142"/>
    </location>
</feature>
<feature type="binding site" evidence="1">
    <location>
        <position position="99"/>
    </location>
    <ligand>
        <name>Fe cation</name>
        <dbReference type="ChEBI" id="CHEBI:24875"/>
    </ligand>
</feature>
<feature type="binding site" evidence="1">
    <location>
        <position position="141"/>
    </location>
    <ligand>
        <name>Fe cation</name>
        <dbReference type="ChEBI" id="CHEBI:24875"/>
    </ligand>
</feature>
<feature type="binding site" evidence="1">
    <location>
        <position position="145"/>
    </location>
    <ligand>
        <name>Fe cation</name>
        <dbReference type="ChEBI" id="CHEBI:24875"/>
    </ligand>
</feature>
<protein>
    <recommendedName>
        <fullName evidence="1">Peptide deformylase</fullName>
        <shortName evidence="1">PDF</shortName>
        <ecNumber evidence="1">3.5.1.88</ecNumber>
    </recommendedName>
    <alternativeName>
        <fullName evidence="1">Polypeptide deformylase</fullName>
    </alternativeName>
</protein>
<proteinExistence type="inferred from homology"/>
<sequence length="181" mass="20523">MIRDLEYYDSPILRKVAAPVTEITDELRQLVLDMSETMAFYKGVGLAAPQVGQSISLFIMGVERELEDGELVFCDFPRVFINPVITQKSEQLVYGNEGCLSIPGLRGEVARPDKITVSAKNLDGQQFSLALEGFLARIVMHETDHLHGVLYIDRMSDKDKTKQFKNNLEKIRRKYSILRGL</sequence>
<keyword id="KW-0378">Hydrolase</keyword>
<keyword id="KW-0408">Iron</keyword>
<keyword id="KW-0479">Metal-binding</keyword>
<keyword id="KW-0648">Protein biosynthesis</keyword>
<dbReference type="EC" id="3.5.1.88" evidence="1"/>
<dbReference type="EMBL" id="AM884177">
    <property type="protein sequence ID" value="CAP07002.1"/>
    <property type="molecule type" value="Genomic_DNA"/>
</dbReference>
<dbReference type="RefSeq" id="WP_009871704.1">
    <property type="nucleotide sequence ID" value="NC_010280.2"/>
</dbReference>
<dbReference type="SMR" id="B0BBY7"/>
<dbReference type="KEGG" id="ctl:CTLon_0605"/>
<dbReference type="HOGENOM" id="CLU_061901_2_0_0"/>
<dbReference type="Proteomes" id="UP001154401">
    <property type="component" value="Chromosome"/>
</dbReference>
<dbReference type="GO" id="GO:0046872">
    <property type="term" value="F:metal ion binding"/>
    <property type="evidence" value="ECO:0007669"/>
    <property type="project" value="UniProtKB-KW"/>
</dbReference>
<dbReference type="GO" id="GO:0042586">
    <property type="term" value="F:peptide deformylase activity"/>
    <property type="evidence" value="ECO:0007669"/>
    <property type="project" value="UniProtKB-UniRule"/>
</dbReference>
<dbReference type="GO" id="GO:0043686">
    <property type="term" value="P:co-translational protein modification"/>
    <property type="evidence" value="ECO:0007669"/>
    <property type="project" value="TreeGrafter"/>
</dbReference>
<dbReference type="GO" id="GO:0006412">
    <property type="term" value="P:translation"/>
    <property type="evidence" value="ECO:0007669"/>
    <property type="project" value="UniProtKB-UniRule"/>
</dbReference>
<dbReference type="CDD" id="cd00487">
    <property type="entry name" value="Pep_deformylase"/>
    <property type="match status" value="1"/>
</dbReference>
<dbReference type="FunFam" id="3.90.45.10:FF:000016">
    <property type="entry name" value="Peptide deformylase"/>
    <property type="match status" value="1"/>
</dbReference>
<dbReference type="Gene3D" id="3.90.45.10">
    <property type="entry name" value="Peptide deformylase"/>
    <property type="match status" value="1"/>
</dbReference>
<dbReference type="HAMAP" id="MF_00163">
    <property type="entry name" value="Pep_deformylase"/>
    <property type="match status" value="1"/>
</dbReference>
<dbReference type="InterPro" id="IPR023635">
    <property type="entry name" value="Peptide_deformylase"/>
</dbReference>
<dbReference type="InterPro" id="IPR036821">
    <property type="entry name" value="Peptide_deformylase_sf"/>
</dbReference>
<dbReference type="NCBIfam" id="TIGR00079">
    <property type="entry name" value="pept_deformyl"/>
    <property type="match status" value="1"/>
</dbReference>
<dbReference type="NCBIfam" id="NF001159">
    <property type="entry name" value="PRK00150.1-3"/>
    <property type="match status" value="1"/>
</dbReference>
<dbReference type="PANTHER" id="PTHR10458">
    <property type="entry name" value="PEPTIDE DEFORMYLASE"/>
    <property type="match status" value="1"/>
</dbReference>
<dbReference type="PANTHER" id="PTHR10458:SF22">
    <property type="entry name" value="PEPTIDE DEFORMYLASE"/>
    <property type="match status" value="1"/>
</dbReference>
<dbReference type="Pfam" id="PF01327">
    <property type="entry name" value="Pep_deformylase"/>
    <property type="match status" value="1"/>
</dbReference>
<dbReference type="PIRSF" id="PIRSF004749">
    <property type="entry name" value="Pep_def"/>
    <property type="match status" value="1"/>
</dbReference>
<dbReference type="PRINTS" id="PR01576">
    <property type="entry name" value="PDEFORMYLASE"/>
</dbReference>
<dbReference type="SUPFAM" id="SSF56420">
    <property type="entry name" value="Peptide deformylase"/>
    <property type="match status" value="1"/>
</dbReference>
<name>DEF_CHLTB</name>
<accession>B0BBY7</accession>
<gene>
    <name evidence="1" type="primary">def</name>
    <name type="ordered locus">CTLon_0605</name>
</gene>
<comment type="function">
    <text evidence="1">Removes the formyl group from the N-terminal Met of newly synthesized proteins. Requires at least a dipeptide for an efficient rate of reaction. N-terminal L-methionine is a prerequisite for activity but the enzyme has broad specificity at other positions.</text>
</comment>
<comment type="catalytic activity">
    <reaction evidence="1">
        <text>N-terminal N-formyl-L-methionyl-[peptide] + H2O = N-terminal L-methionyl-[peptide] + formate</text>
        <dbReference type="Rhea" id="RHEA:24420"/>
        <dbReference type="Rhea" id="RHEA-COMP:10639"/>
        <dbReference type="Rhea" id="RHEA-COMP:10640"/>
        <dbReference type="ChEBI" id="CHEBI:15377"/>
        <dbReference type="ChEBI" id="CHEBI:15740"/>
        <dbReference type="ChEBI" id="CHEBI:49298"/>
        <dbReference type="ChEBI" id="CHEBI:64731"/>
        <dbReference type="EC" id="3.5.1.88"/>
    </reaction>
</comment>
<comment type="cofactor">
    <cofactor evidence="1">
        <name>Fe(2+)</name>
        <dbReference type="ChEBI" id="CHEBI:29033"/>
    </cofactor>
    <text evidence="1">Binds 1 Fe(2+) ion.</text>
</comment>
<comment type="similarity">
    <text evidence="1">Belongs to the polypeptide deformylase family.</text>
</comment>
<reference key="1">
    <citation type="journal article" date="2008" name="Genome Res.">
        <title>Chlamydia trachomatis: genome sequence analysis of lymphogranuloma venereum isolates.</title>
        <authorList>
            <person name="Thomson N.R."/>
            <person name="Holden M.T.G."/>
            <person name="Carder C."/>
            <person name="Lennard N."/>
            <person name="Lockey S.J."/>
            <person name="Marsh P."/>
            <person name="Skipp P."/>
            <person name="O'Connor C.D."/>
            <person name="Goodhead I."/>
            <person name="Norbertzcak H."/>
            <person name="Harris B."/>
            <person name="Ormond D."/>
            <person name="Rance R."/>
            <person name="Quail M.A."/>
            <person name="Parkhill J."/>
            <person name="Stephens R.S."/>
            <person name="Clarke I.N."/>
        </authorList>
    </citation>
    <scope>NUCLEOTIDE SEQUENCE [LARGE SCALE GENOMIC DNA]</scope>
    <source>
        <strain>UCH-1/proctitis</strain>
    </source>
</reference>